<accession>Q8U010</accession>
<keyword id="KW-0002">3D-structure</keyword>
<keyword id="KW-1185">Reference proteome</keyword>
<keyword id="KW-0687">Ribonucleoprotein</keyword>
<keyword id="KW-0689">Ribosomal protein</keyword>
<keyword id="KW-0694">RNA-binding</keyword>
<keyword id="KW-0699">rRNA-binding</keyword>
<sequence length="121" mass="14332">MKISSKQPRKQRKFLYNAPLHVRQKLMSAPLSRELREKYKVRNLPVRVGDKVRIMRGDYKGHEGKVVEVDLKRYRIYVEGATLRKTNGTEVFYPIHPSNVMIIELNLEDEKRKKIIERRAG</sequence>
<protein>
    <recommendedName>
        <fullName evidence="1">Large ribosomal subunit protein uL24</fullName>
    </recommendedName>
    <alternativeName>
        <fullName>50S ribosomal protein L24</fullName>
    </alternativeName>
</protein>
<reference key="1">
    <citation type="journal article" date="1999" name="Genetics">
        <title>Divergence of the hyperthermophilic archaea Pyrococcus furiosus and P. horikoshii inferred from complete genomic sequences.</title>
        <authorList>
            <person name="Maeder D.L."/>
            <person name="Weiss R.B."/>
            <person name="Dunn D.M."/>
            <person name="Cherry J.L."/>
            <person name="Gonzalez J.M."/>
            <person name="DiRuggiero J."/>
            <person name="Robb F.T."/>
        </authorList>
    </citation>
    <scope>NUCLEOTIDE SEQUENCE [LARGE SCALE GENOMIC DNA]</scope>
    <source>
        <strain>ATCC 43587 / DSM 3638 / JCM 8422 / Vc1</strain>
    </source>
</reference>
<reference evidence="4" key="2">
    <citation type="journal article" date="2013" name="Nucleic Acids Res.">
        <title>Promiscuous behaviour of archaeal ribosomal proteins: implications for eukaryotic ribosome evolution.</title>
        <authorList>
            <person name="Armache J.P."/>
            <person name="Anger A.M."/>
            <person name="Marquez V."/>
            <person name="Franckenberg S."/>
            <person name="Frohlich T."/>
            <person name="Villa E."/>
            <person name="Berninghausen O."/>
            <person name="Thomm M."/>
            <person name="Arnold G.J."/>
            <person name="Beckmann R."/>
            <person name="Wilson D.N."/>
        </authorList>
    </citation>
    <scope>STRUCTURE BY ELECTRON MICROSCOPY (6.60 ANGSTROMS) IN THE 70S RIBOSOME</scope>
    <scope>SUBUNIT</scope>
</reference>
<proteinExistence type="evidence at protein level"/>
<dbReference type="EMBL" id="AE009950">
    <property type="protein sequence ID" value="AAL81937.1"/>
    <property type="status" value="ALT_INIT"/>
    <property type="molecule type" value="Genomic_DNA"/>
</dbReference>
<dbReference type="PDB" id="4V4N">
    <property type="method" value="EM"/>
    <property type="resolution" value="9.00 A"/>
    <property type="chains" value="U=1-121"/>
</dbReference>
<dbReference type="PDB" id="4V6U">
    <property type="method" value="EM"/>
    <property type="resolution" value="6.60 A"/>
    <property type="chains" value="BU=1-121"/>
</dbReference>
<dbReference type="PDBsum" id="4V4N"/>
<dbReference type="PDBsum" id="4V6U"/>
<dbReference type="SMR" id="Q8U010"/>
<dbReference type="STRING" id="186497.PF1813"/>
<dbReference type="PaxDb" id="186497-PF1813"/>
<dbReference type="KEGG" id="pfu:PF1813"/>
<dbReference type="PATRIC" id="fig|186497.12.peg.1884"/>
<dbReference type="eggNOG" id="arCOG04094">
    <property type="taxonomic scope" value="Archaea"/>
</dbReference>
<dbReference type="HOGENOM" id="CLU_093240_2_1_2"/>
<dbReference type="OrthoDB" id="10899at2157"/>
<dbReference type="PhylomeDB" id="Q8U010"/>
<dbReference type="Proteomes" id="UP000001013">
    <property type="component" value="Chromosome"/>
</dbReference>
<dbReference type="GO" id="GO:0015934">
    <property type="term" value="C:large ribosomal subunit"/>
    <property type="evidence" value="ECO:0007669"/>
    <property type="project" value="InterPro"/>
</dbReference>
<dbReference type="GO" id="GO:0019843">
    <property type="term" value="F:rRNA binding"/>
    <property type="evidence" value="ECO:0007669"/>
    <property type="project" value="UniProtKB-UniRule"/>
</dbReference>
<dbReference type="GO" id="GO:0003735">
    <property type="term" value="F:structural constituent of ribosome"/>
    <property type="evidence" value="ECO:0007669"/>
    <property type="project" value="InterPro"/>
</dbReference>
<dbReference type="GO" id="GO:0006412">
    <property type="term" value="P:translation"/>
    <property type="evidence" value="ECO:0007669"/>
    <property type="project" value="UniProtKB-UniRule"/>
</dbReference>
<dbReference type="CDD" id="cd06089">
    <property type="entry name" value="KOW_RPL26"/>
    <property type="match status" value="1"/>
</dbReference>
<dbReference type="FunFam" id="2.30.30.30:FF:000009">
    <property type="entry name" value="60S ribosomal protein L26"/>
    <property type="match status" value="1"/>
</dbReference>
<dbReference type="Gene3D" id="2.30.30.30">
    <property type="match status" value="1"/>
</dbReference>
<dbReference type="HAMAP" id="MF_01326_A">
    <property type="entry name" value="Ribosomal_uL24_A"/>
    <property type="match status" value="1"/>
</dbReference>
<dbReference type="InterPro" id="IPR005824">
    <property type="entry name" value="KOW"/>
</dbReference>
<dbReference type="InterPro" id="IPR014722">
    <property type="entry name" value="Rib_uL2_dom2"/>
</dbReference>
<dbReference type="InterPro" id="IPR005825">
    <property type="entry name" value="Ribosomal_uL24_CS"/>
</dbReference>
<dbReference type="InterPro" id="IPR005756">
    <property type="entry name" value="Ribosomal_uL24_euk/arc"/>
</dbReference>
<dbReference type="InterPro" id="IPR041988">
    <property type="entry name" value="Ribosomal_uL24_KOW"/>
</dbReference>
<dbReference type="InterPro" id="IPR008991">
    <property type="entry name" value="Translation_prot_SH3-like_sf"/>
</dbReference>
<dbReference type="NCBIfam" id="TIGR01080">
    <property type="entry name" value="rplX_A_E"/>
    <property type="match status" value="1"/>
</dbReference>
<dbReference type="PANTHER" id="PTHR11143">
    <property type="entry name" value="60S RIBOSOMAL PROTEIN L26 FAMILY MEMBER"/>
    <property type="match status" value="1"/>
</dbReference>
<dbReference type="Pfam" id="PF00467">
    <property type="entry name" value="KOW"/>
    <property type="match status" value="1"/>
</dbReference>
<dbReference type="Pfam" id="PF16906">
    <property type="entry name" value="Ribosomal_L26"/>
    <property type="match status" value="1"/>
</dbReference>
<dbReference type="SMART" id="SM00739">
    <property type="entry name" value="KOW"/>
    <property type="match status" value="1"/>
</dbReference>
<dbReference type="SUPFAM" id="SSF50104">
    <property type="entry name" value="Translation proteins SH3-like domain"/>
    <property type="match status" value="1"/>
</dbReference>
<dbReference type="PROSITE" id="PS01108">
    <property type="entry name" value="RIBOSOMAL_L24"/>
    <property type="match status" value="1"/>
</dbReference>
<gene>
    <name evidence="1" type="primary">rpl24</name>
    <name type="ordered locus">PF1813</name>
</gene>
<name>RL24_PYRFU</name>
<feature type="chain" id="PRO_0000130778" description="Large ribosomal subunit protein uL24">
    <location>
        <begin position="1"/>
        <end position="121"/>
    </location>
</feature>
<organism>
    <name type="scientific">Pyrococcus furiosus (strain ATCC 43587 / DSM 3638 / JCM 8422 / Vc1)</name>
    <dbReference type="NCBI Taxonomy" id="186497"/>
    <lineage>
        <taxon>Archaea</taxon>
        <taxon>Methanobacteriati</taxon>
        <taxon>Methanobacteriota</taxon>
        <taxon>Thermococci</taxon>
        <taxon>Thermococcales</taxon>
        <taxon>Thermococcaceae</taxon>
        <taxon>Pyrococcus</taxon>
    </lineage>
</organism>
<evidence type="ECO:0000255" key="1">
    <source>
        <dbReference type="HAMAP-Rule" id="MF_01326"/>
    </source>
</evidence>
<evidence type="ECO:0000269" key="2">
    <source>
    </source>
</evidence>
<evidence type="ECO:0000305" key="3"/>
<evidence type="ECO:0007744" key="4">
    <source>
        <dbReference type="PDB" id="4V6U"/>
    </source>
</evidence>
<comment type="function">
    <text evidence="1">One of two assembly initiator proteins, it binds directly to the 5'-end of the 23S rRNA, where it nucleates assembly of the 50S subunit.</text>
</comment>
<comment type="function">
    <text evidence="1">Located at the polypeptide exit tunnel on the outside of the subunit.</text>
</comment>
<comment type="subunit">
    <text evidence="1 2">Part of the 50S ribosomal subunit.</text>
</comment>
<comment type="similarity">
    <text evidence="1">Belongs to the universal ribosomal protein uL24 family.</text>
</comment>
<comment type="sequence caution" evidence="3">
    <conflict type="erroneous initiation">
        <sequence resource="EMBL-CDS" id="AAL81937"/>
    </conflict>
    <text>Extended N-terminus.</text>
</comment>